<protein>
    <recommendedName>
        <fullName evidence="2">Small ribosomal subunit protein uS12</fullName>
    </recommendedName>
    <alternativeName>
        <fullName evidence="3">30S ribosomal protein S12</fullName>
    </alternativeName>
</protein>
<name>RS12_WOLPM</name>
<feature type="chain" id="PRO_0000146355" description="Small ribosomal subunit protein uS12">
    <location>
        <begin position="1"/>
        <end position="124"/>
    </location>
</feature>
<feature type="modified residue" description="3-methylthioaspartic acid" evidence="1">
    <location>
        <position position="90"/>
    </location>
</feature>
<comment type="function">
    <text evidence="2">With S4 and S5 plays an important role in translational accuracy.</text>
</comment>
<comment type="function">
    <text evidence="2">Interacts with and stabilizes bases of the 16S rRNA that are involved in tRNA selection in the A site and with the mRNA backbone. Located at the interface of the 30S and 50S subunits, it traverses the body of the 30S subunit contacting proteins on the other side and probably holding the rRNA structure together. The combined cluster of proteins S8, S12 and S17 appears to hold together the shoulder and platform of the 30S subunit.</text>
</comment>
<comment type="subunit">
    <text evidence="2">Part of the 30S ribosomal subunit. Contacts proteins S8 and S17. May interact with IF1 in the 30S initiation complex.</text>
</comment>
<comment type="similarity">
    <text evidence="2">Belongs to the universal ribosomal protein uS12 family.</text>
</comment>
<reference key="1">
    <citation type="journal article" date="2004" name="PLoS Biol.">
        <title>Phylogenomics of the reproductive parasite Wolbachia pipientis wMel: a streamlined genome overrun by mobile genetic elements.</title>
        <authorList>
            <person name="Wu M."/>
            <person name="Sun L.V."/>
            <person name="Vamathevan J.J."/>
            <person name="Riegler M."/>
            <person name="DeBoy R.T."/>
            <person name="Brownlie J.C."/>
            <person name="McGraw E.A."/>
            <person name="Martin W."/>
            <person name="Esser C."/>
            <person name="Ahmadinejad N."/>
            <person name="Wiegand C."/>
            <person name="Madupu R."/>
            <person name="Beanan M.J."/>
            <person name="Brinkac L.M."/>
            <person name="Daugherty S.C."/>
            <person name="Durkin A.S."/>
            <person name="Kolonay J.F."/>
            <person name="Nelson W.C."/>
            <person name="Mohamoud Y."/>
            <person name="Lee P."/>
            <person name="Berry K.J."/>
            <person name="Young M.B."/>
            <person name="Utterback T.R."/>
            <person name="Weidman J.F."/>
            <person name="Nierman W.C."/>
            <person name="Paulsen I.T."/>
            <person name="Nelson K.E."/>
            <person name="Tettelin H."/>
            <person name="O'Neill S.L."/>
            <person name="Eisen J.A."/>
        </authorList>
    </citation>
    <scope>NUCLEOTIDE SEQUENCE [LARGE SCALE GENOMIC DNA]</scope>
</reference>
<accession>Q73IX9</accession>
<keyword id="KW-0488">Methylation</keyword>
<keyword id="KW-0687">Ribonucleoprotein</keyword>
<keyword id="KW-0689">Ribosomal protein</keyword>
<keyword id="KW-0694">RNA-binding</keyword>
<keyword id="KW-0699">rRNA-binding</keyword>
<keyword id="KW-0820">tRNA-binding</keyword>
<organism>
    <name type="scientific">Wolbachia pipientis wMel</name>
    <dbReference type="NCBI Taxonomy" id="163164"/>
    <lineage>
        <taxon>Bacteria</taxon>
        <taxon>Pseudomonadati</taxon>
        <taxon>Pseudomonadota</taxon>
        <taxon>Alphaproteobacteria</taxon>
        <taxon>Rickettsiales</taxon>
        <taxon>Anaplasmataceae</taxon>
        <taxon>Wolbachieae</taxon>
        <taxon>Wolbachia</taxon>
    </lineage>
</organism>
<dbReference type="EMBL" id="AE017196">
    <property type="protein sequence ID" value="AAS13781.1"/>
    <property type="molecule type" value="Genomic_DNA"/>
</dbReference>
<dbReference type="RefSeq" id="WP_006279787.1">
    <property type="nucleotide sequence ID" value="NZ_OX384529.1"/>
</dbReference>
<dbReference type="SMR" id="Q73IX9"/>
<dbReference type="EnsemblBacteria" id="AAS13781">
    <property type="protein sequence ID" value="AAS13781"/>
    <property type="gene ID" value="WD_0014"/>
</dbReference>
<dbReference type="GeneID" id="70035509"/>
<dbReference type="KEGG" id="wol:WD_0014"/>
<dbReference type="eggNOG" id="COG0048">
    <property type="taxonomic scope" value="Bacteria"/>
</dbReference>
<dbReference type="Proteomes" id="UP000008215">
    <property type="component" value="Chromosome"/>
</dbReference>
<dbReference type="GO" id="GO:0015935">
    <property type="term" value="C:small ribosomal subunit"/>
    <property type="evidence" value="ECO:0007669"/>
    <property type="project" value="InterPro"/>
</dbReference>
<dbReference type="GO" id="GO:0019843">
    <property type="term" value="F:rRNA binding"/>
    <property type="evidence" value="ECO:0007669"/>
    <property type="project" value="UniProtKB-UniRule"/>
</dbReference>
<dbReference type="GO" id="GO:0003735">
    <property type="term" value="F:structural constituent of ribosome"/>
    <property type="evidence" value="ECO:0007669"/>
    <property type="project" value="InterPro"/>
</dbReference>
<dbReference type="GO" id="GO:0000049">
    <property type="term" value="F:tRNA binding"/>
    <property type="evidence" value="ECO:0007669"/>
    <property type="project" value="UniProtKB-UniRule"/>
</dbReference>
<dbReference type="GO" id="GO:0006412">
    <property type="term" value="P:translation"/>
    <property type="evidence" value="ECO:0007669"/>
    <property type="project" value="UniProtKB-UniRule"/>
</dbReference>
<dbReference type="CDD" id="cd03368">
    <property type="entry name" value="Ribosomal_S12"/>
    <property type="match status" value="1"/>
</dbReference>
<dbReference type="FunFam" id="2.40.50.140:FF:000001">
    <property type="entry name" value="30S ribosomal protein S12"/>
    <property type="match status" value="1"/>
</dbReference>
<dbReference type="Gene3D" id="2.40.50.140">
    <property type="entry name" value="Nucleic acid-binding proteins"/>
    <property type="match status" value="1"/>
</dbReference>
<dbReference type="HAMAP" id="MF_00403_B">
    <property type="entry name" value="Ribosomal_uS12_B"/>
    <property type="match status" value="1"/>
</dbReference>
<dbReference type="InterPro" id="IPR012340">
    <property type="entry name" value="NA-bd_OB-fold"/>
</dbReference>
<dbReference type="InterPro" id="IPR006032">
    <property type="entry name" value="Ribosomal_uS12"/>
</dbReference>
<dbReference type="InterPro" id="IPR005679">
    <property type="entry name" value="Ribosomal_uS12_bac"/>
</dbReference>
<dbReference type="NCBIfam" id="TIGR00981">
    <property type="entry name" value="rpsL_bact"/>
    <property type="match status" value="1"/>
</dbReference>
<dbReference type="PANTHER" id="PTHR11652">
    <property type="entry name" value="30S RIBOSOMAL PROTEIN S12 FAMILY MEMBER"/>
    <property type="match status" value="1"/>
</dbReference>
<dbReference type="Pfam" id="PF00164">
    <property type="entry name" value="Ribosom_S12_S23"/>
    <property type="match status" value="1"/>
</dbReference>
<dbReference type="PIRSF" id="PIRSF002133">
    <property type="entry name" value="Ribosomal_S12/S23"/>
    <property type="match status" value="1"/>
</dbReference>
<dbReference type="PRINTS" id="PR01034">
    <property type="entry name" value="RIBOSOMALS12"/>
</dbReference>
<dbReference type="SUPFAM" id="SSF50249">
    <property type="entry name" value="Nucleic acid-binding proteins"/>
    <property type="match status" value="1"/>
</dbReference>
<dbReference type="PROSITE" id="PS00055">
    <property type="entry name" value="RIBOSOMAL_S12"/>
    <property type="match status" value="1"/>
</dbReference>
<evidence type="ECO:0000250" key="1"/>
<evidence type="ECO:0000255" key="2">
    <source>
        <dbReference type="HAMAP-Rule" id="MF_00403"/>
    </source>
</evidence>
<evidence type="ECO:0000305" key="3"/>
<proteinExistence type="inferred from homology"/>
<gene>
    <name evidence="2" type="primary">rpsL</name>
    <name type="ordered locus">WD_0014</name>
</gene>
<sequence length="124" mass="13733">MPTINQLIRKGRLGLTHKKKVPALGESNPQRRGVCTKVYTTTPRKPNSALRKVARVKISGYGEVTAYIPGEGHNLQEHSVVLIRGGRVKDLPGVRYHIIRGALDLRGVQNRKKARSKYGVKKSG</sequence>